<evidence type="ECO:0000305" key="1"/>
<feature type="chain" id="PRO_0000340711" description="Sperm microtubule associated protein 1">
    <location>
        <begin position="1"/>
        <end position="155"/>
    </location>
</feature>
<proteinExistence type="evidence at transcript level"/>
<keyword id="KW-1185">Reference proteome</keyword>
<name>SPMA1_MOUSE</name>
<accession>Q9DAQ5</accession>
<accession>Q80ZQ1</accession>
<protein>
    <recommendedName>
        <fullName>Sperm microtubule associated protein 1</fullName>
    </recommendedName>
</protein>
<gene>
    <name type="primary">Spmap1</name>
</gene>
<dbReference type="EMBL" id="AK005619">
    <property type="protein sequence ID" value="BAB24154.1"/>
    <property type="molecule type" value="mRNA"/>
</dbReference>
<dbReference type="EMBL" id="AL596446">
    <property type="status" value="NOT_ANNOTATED_CDS"/>
    <property type="molecule type" value="Genomic_DNA"/>
</dbReference>
<dbReference type="EMBL" id="BC048607">
    <property type="protein sequence ID" value="AAH48607.1"/>
    <property type="status" value="ALT_FRAME"/>
    <property type="molecule type" value="mRNA"/>
</dbReference>
<dbReference type="CCDS" id="CCDS36297.1"/>
<dbReference type="RefSeq" id="NP_082432.2">
    <property type="nucleotide sequence ID" value="NM_028156.3"/>
</dbReference>
<dbReference type="SMR" id="Q9DAQ5"/>
<dbReference type="STRING" id="10090.ENSMUSP00000103202"/>
<dbReference type="PaxDb" id="10090-ENSMUSP00000103202"/>
<dbReference type="Antibodypedia" id="76316">
    <property type="antibodies" value="6 antibodies from 6 providers"/>
</dbReference>
<dbReference type="DNASU" id="72215"/>
<dbReference type="Ensembl" id="ENSMUST00000107576.2">
    <property type="protein sequence ID" value="ENSMUSP00000103202.2"/>
    <property type="gene ID" value="ENSMUSG00000018543.9"/>
</dbReference>
<dbReference type="GeneID" id="72215"/>
<dbReference type="KEGG" id="mmu:72215"/>
<dbReference type="UCSC" id="uc007let.1">
    <property type="organism name" value="mouse"/>
</dbReference>
<dbReference type="AGR" id="MGI:1919465"/>
<dbReference type="CTD" id="388381"/>
<dbReference type="MGI" id="MGI:1919465">
    <property type="gene designation" value="Spmap1"/>
</dbReference>
<dbReference type="VEuPathDB" id="HostDB:ENSMUSG00000018543"/>
<dbReference type="eggNOG" id="ENOG502S1V2">
    <property type="taxonomic scope" value="Eukaryota"/>
</dbReference>
<dbReference type="GeneTree" id="ENSGT00390000004450"/>
<dbReference type="HOGENOM" id="CLU_120758_0_0_1"/>
<dbReference type="InParanoid" id="Q9DAQ5"/>
<dbReference type="OMA" id="QKEFILD"/>
<dbReference type="OrthoDB" id="9935043at2759"/>
<dbReference type="PhylomeDB" id="Q9DAQ5"/>
<dbReference type="TreeFam" id="TF338072"/>
<dbReference type="BioGRID-ORCS" id="72215">
    <property type="hits" value="6 hits in 77 CRISPR screens"/>
</dbReference>
<dbReference type="PRO" id="PR:Q9DAQ5"/>
<dbReference type="Proteomes" id="UP000000589">
    <property type="component" value="Chromosome 11"/>
</dbReference>
<dbReference type="RNAct" id="Q9DAQ5">
    <property type="molecule type" value="protein"/>
</dbReference>
<dbReference type="Bgee" id="ENSMUSG00000018543">
    <property type="expression patterns" value="Expressed in seminiferous tubule of testis and 46 other cell types or tissues"/>
</dbReference>
<dbReference type="InterPro" id="IPR028027">
    <property type="entry name" value="SPMAP1"/>
</dbReference>
<dbReference type="PANTHER" id="PTHR34221">
    <property type="entry name" value="HYPOTHETICAL PROTEIN LOC691189"/>
    <property type="match status" value="1"/>
</dbReference>
<dbReference type="PANTHER" id="PTHR34221:SF2">
    <property type="entry name" value="RIKEN CDNA 1700001P01 GENE"/>
    <property type="match status" value="1"/>
</dbReference>
<dbReference type="Pfam" id="PF15075">
    <property type="entry name" value="SPMAP1-like"/>
    <property type="match status" value="1"/>
</dbReference>
<organism>
    <name type="scientific">Mus musculus</name>
    <name type="common">Mouse</name>
    <dbReference type="NCBI Taxonomy" id="10090"/>
    <lineage>
        <taxon>Eukaryota</taxon>
        <taxon>Metazoa</taxon>
        <taxon>Chordata</taxon>
        <taxon>Craniata</taxon>
        <taxon>Vertebrata</taxon>
        <taxon>Euteleostomi</taxon>
        <taxon>Mammalia</taxon>
        <taxon>Eutheria</taxon>
        <taxon>Euarchontoglires</taxon>
        <taxon>Glires</taxon>
        <taxon>Rodentia</taxon>
        <taxon>Myomorpha</taxon>
        <taxon>Muroidea</taxon>
        <taxon>Muridae</taxon>
        <taxon>Murinae</taxon>
        <taxon>Mus</taxon>
        <taxon>Mus</taxon>
    </lineage>
</organism>
<comment type="sequence caution" evidence="1">
    <conflict type="frameshift">
        <sequence resource="EMBL-CDS" id="AAH48607"/>
    </conflict>
</comment>
<sequence length="155" mass="17772">MACCYNSPRRLEKSFVLDGVAVSTMAQAYSIMRPKLWSAIPPYNPQLDHHSRRYFRSRVVPPILRKTDQDHGGTGRDGWIVDYFHIFGQGQRYLNRRNWAGAGHSLQQVSGHDYYNSNPKAITTGLNGRFGYRRNTPALRQHTSVFGEVTPFPIF</sequence>
<reference key="1">
    <citation type="journal article" date="2005" name="Science">
        <title>The transcriptional landscape of the mammalian genome.</title>
        <authorList>
            <person name="Carninci P."/>
            <person name="Kasukawa T."/>
            <person name="Katayama S."/>
            <person name="Gough J."/>
            <person name="Frith M.C."/>
            <person name="Maeda N."/>
            <person name="Oyama R."/>
            <person name="Ravasi T."/>
            <person name="Lenhard B."/>
            <person name="Wells C."/>
            <person name="Kodzius R."/>
            <person name="Shimokawa K."/>
            <person name="Bajic V.B."/>
            <person name="Brenner S.E."/>
            <person name="Batalov S."/>
            <person name="Forrest A.R."/>
            <person name="Zavolan M."/>
            <person name="Davis M.J."/>
            <person name="Wilming L.G."/>
            <person name="Aidinis V."/>
            <person name="Allen J.E."/>
            <person name="Ambesi-Impiombato A."/>
            <person name="Apweiler R."/>
            <person name="Aturaliya R.N."/>
            <person name="Bailey T.L."/>
            <person name="Bansal M."/>
            <person name="Baxter L."/>
            <person name="Beisel K.W."/>
            <person name="Bersano T."/>
            <person name="Bono H."/>
            <person name="Chalk A.M."/>
            <person name="Chiu K.P."/>
            <person name="Choudhary V."/>
            <person name="Christoffels A."/>
            <person name="Clutterbuck D.R."/>
            <person name="Crowe M.L."/>
            <person name="Dalla E."/>
            <person name="Dalrymple B.P."/>
            <person name="de Bono B."/>
            <person name="Della Gatta G."/>
            <person name="di Bernardo D."/>
            <person name="Down T."/>
            <person name="Engstrom P."/>
            <person name="Fagiolini M."/>
            <person name="Faulkner G."/>
            <person name="Fletcher C.F."/>
            <person name="Fukushima T."/>
            <person name="Furuno M."/>
            <person name="Futaki S."/>
            <person name="Gariboldi M."/>
            <person name="Georgii-Hemming P."/>
            <person name="Gingeras T.R."/>
            <person name="Gojobori T."/>
            <person name="Green R.E."/>
            <person name="Gustincich S."/>
            <person name="Harbers M."/>
            <person name="Hayashi Y."/>
            <person name="Hensch T.K."/>
            <person name="Hirokawa N."/>
            <person name="Hill D."/>
            <person name="Huminiecki L."/>
            <person name="Iacono M."/>
            <person name="Ikeo K."/>
            <person name="Iwama A."/>
            <person name="Ishikawa T."/>
            <person name="Jakt M."/>
            <person name="Kanapin A."/>
            <person name="Katoh M."/>
            <person name="Kawasawa Y."/>
            <person name="Kelso J."/>
            <person name="Kitamura H."/>
            <person name="Kitano H."/>
            <person name="Kollias G."/>
            <person name="Krishnan S.P."/>
            <person name="Kruger A."/>
            <person name="Kummerfeld S.K."/>
            <person name="Kurochkin I.V."/>
            <person name="Lareau L.F."/>
            <person name="Lazarevic D."/>
            <person name="Lipovich L."/>
            <person name="Liu J."/>
            <person name="Liuni S."/>
            <person name="McWilliam S."/>
            <person name="Madan Babu M."/>
            <person name="Madera M."/>
            <person name="Marchionni L."/>
            <person name="Matsuda H."/>
            <person name="Matsuzawa S."/>
            <person name="Miki H."/>
            <person name="Mignone F."/>
            <person name="Miyake S."/>
            <person name="Morris K."/>
            <person name="Mottagui-Tabar S."/>
            <person name="Mulder N."/>
            <person name="Nakano N."/>
            <person name="Nakauchi H."/>
            <person name="Ng P."/>
            <person name="Nilsson R."/>
            <person name="Nishiguchi S."/>
            <person name="Nishikawa S."/>
            <person name="Nori F."/>
            <person name="Ohara O."/>
            <person name="Okazaki Y."/>
            <person name="Orlando V."/>
            <person name="Pang K.C."/>
            <person name="Pavan W.J."/>
            <person name="Pavesi G."/>
            <person name="Pesole G."/>
            <person name="Petrovsky N."/>
            <person name="Piazza S."/>
            <person name="Reed J."/>
            <person name="Reid J.F."/>
            <person name="Ring B.Z."/>
            <person name="Ringwald M."/>
            <person name="Rost B."/>
            <person name="Ruan Y."/>
            <person name="Salzberg S.L."/>
            <person name="Sandelin A."/>
            <person name="Schneider C."/>
            <person name="Schoenbach C."/>
            <person name="Sekiguchi K."/>
            <person name="Semple C.A."/>
            <person name="Seno S."/>
            <person name="Sessa L."/>
            <person name="Sheng Y."/>
            <person name="Shibata Y."/>
            <person name="Shimada H."/>
            <person name="Shimada K."/>
            <person name="Silva D."/>
            <person name="Sinclair B."/>
            <person name="Sperling S."/>
            <person name="Stupka E."/>
            <person name="Sugiura K."/>
            <person name="Sultana R."/>
            <person name="Takenaka Y."/>
            <person name="Taki K."/>
            <person name="Tammoja K."/>
            <person name="Tan S.L."/>
            <person name="Tang S."/>
            <person name="Taylor M.S."/>
            <person name="Tegner J."/>
            <person name="Teichmann S.A."/>
            <person name="Ueda H.R."/>
            <person name="van Nimwegen E."/>
            <person name="Verardo R."/>
            <person name="Wei C.L."/>
            <person name="Yagi K."/>
            <person name="Yamanishi H."/>
            <person name="Zabarovsky E."/>
            <person name="Zhu S."/>
            <person name="Zimmer A."/>
            <person name="Hide W."/>
            <person name="Bult C."/>
            <person name="Grimmond S.M."/>
            <person name="Teasdale R.D."/>
            <person name="Liu E.T."/>
            <person name="Brusic V."/>
            <person name="Quackenbush J."/>
            <person name="Wahlestedt C."/>
            <person name="Mattick J.S."/>
            <person name="Hume D.A."/>
            <person name="Kai C."/>
            <person name="Sasaki D."/>
            <person name="Tomaru Y."/>
            <person name="Fukuda S."/>
            <person name="Kanamori-Katayama M."/>
            <person name="Suzuki M."/>
            <person name="Aoki J."/>
            <person name="Arakawa T."/>
            <person name="Iida J."/>
            <person name="Imamura K."/>
            <person name="Itoh M."/>
            <person name="Kato T."/>
            <person name="Kawaji H."/>
            <person name="Kawagashira N."/>
            <person name="Kawashima T."/>
            <person name="Kojima M."/>
            <person name="Kondo S."/>
            <person name="Konno H."/>
            <person name="Nakano K."/>
            <person name="Ninomiya N."/>
            <person name="Nishio T."/>
            <person name="Okada M."/>
            <person name="Plessy C."/>
            <person name="Shibata K."/>
            <person name="Shiraki T."/>
            <person name="Suzuki S."/>
            <person name="Tagami M."/>
            <person name="Waki K."/>
            <person name="Watahiki A."/>
            <person name="Okamura-Oho Y."/>
            <person name="Suzuki H."/>
            <person name="Kawai J."/>
            <person name="Hayashizaki Y."/>
        </authorList>
    </citation>
    <scope>NUCLEOTIDE SEQUENCE [LARGE SCALE MRNA]</scope>
    <source>
        <strain>C57BL/6J</strain>
        <tissue>Testis</tissue>
    </source>
</reference>
<reference key="2">
    <citation type="journal article" date="2009" name="PLoS Biol.">
        <title>Lineage-specific biology revealed by a finished genome assembly of the mouse.</title>
        <authorList>
            <person name="Church D.M."/>
            <person name="Goodstadt L."/>
            <person name="Hillier L.W."/>
            <person name="Zody M.C."/>
            <person name="Goldstein S."/>
            <person name="She X."/>
            <person name="Bult C.J."/>
            <person name="Agarwala R."/>
            <person name="Cherry J.L."/>
            <person name="DiCuccio M."/>
            <person name="Hlavina W."/>
            <person name="Kapustin Y."/>
            <person name="Meric P."/>
            <person name="Maglott D."/>
            <person name="Birtle Z."/>
            <person name="Marques A.C."/>
            <person name="Graves T."/>
            <person name="Zhou S."/>
            <person name="Teague B."/>
            <person name="Potamousis K."/>
            <person name="Churas C."/>
            <person name="Place M."/>
            <person name="Herschleb J."/>
            <person name="Runnheim R."/>
            <person name="Forrest D."/>
            <person name="Amos-Landgraf J."/>
            <person name="Schwartz D.C."/>
            <person name="Cheng Z."/>
            <person name="Lindblad-Toh K."/>
            <person name="Eichler E.E."/>
            <person name="Ponting C.P."/>
        </authorList>
    </citation>
    <scope>NUCLEOTIDE SEQUENCE [LARGE SCALE GENOMIC DNA]</scope>
    <source>
        <strain>C57BL/6J</strain>
    </source>
</reference>
<reference key="3">
    <citation type="journal article" date="2004" name="Genome Res.">
        <title>The status, quality, and expansion of the NIH full-length cDNA project: the Mammalian Gene Collection (MGC).</title>
        <authorList>
            <consortium name="The MGC Project Team"/>
        </authorList>
    </citation>
    <scope>NUCLEOTIDE SEQUENCE [LARGE SCALE MRNA]</scope>
    <source>
        <tissue>Testis</tissue>
    </source>
</reference>